<gene>
    <name evidence="1" type="primary">pepT</name>
    <name type="ordered locus">CGSHiEE_04265</name>
</gene>
<proteinExistence type="inferred from homology"/>
<name>PEPT_HAEIE</name>
<comment type="function">
    <text evidence="1">Cleaves the N-terminal amino acid of tripeptides.</text>
</comment>
<comment type="catalytic activity">
    <reaction evidence="1">
        <text>Release of the N-terminal residue from a tripeptide.</text>
        <dbReference type="EC" id="3.4.11.4"/>
    </reaction>
</comment>
<comment type="cofactor">
    <cofactor evidence="1">
        <name>Zn(2+)</name>
        <dbReference type="ChEBI" id="CHEBI:29105"/>
    </cofactor>
    <text evidence="1">Binds 2 Zn(2+) ions per subunit.</text>
</comment>
<comment type="subcellular location">
    <subcellularLocation>
        <location evidence="1">Cytoplasm</location>
    </subcellularLocation>
</comment>
<comment type="similarity">
    <text evidence="1">Belongs to the peptidase M20B family.</text>
</comment>
<evidence type="ECO:0000255" key="1">
    <source>
        <dbReference type="HAMAP-Rule" id="MF_00550"/>
    </source>
</evidence>
<feature type="chain" id="PRO_1000017846" description="Peptidase T">
    <location>
        <begin position="1"/>
        <end position="412"/>
    </location>
</feature>
<feature type="active site" evidence="1">
    <location>
        <position position="86"/>
    </location>
</feature>
<feature type="active site" description="Proton acceptor" evidence="1">
    <location>
        <position position="179"/>
    </location>
</feature>
<feature type="binding site" evidence="1">
    <location>
        <position position="84"/>
    </location>
    <ligand>
        <name>Zn(2+)</name>
        <dbReference type="ChEBI" id="CHEBI:29105"/>
        <label>1</label>
    </ligand>
</feature>
<feature type="binding site" evidence="1">
    <location>
        <position position="146"/>
    </location>
    <ligand>
        <name>Zn(2+)</name>
        <dbReference type="ChEBI" id="CHEBI:29105"/>
        <label>1</label>
    </ligand>
</feature>
<feature type="binding site" evidence="1">
    <location>
        <position position="146"/>
    </location>
    <ligand>
        <name>Zn(2+)</name>
        <dbReference type="ChEBI" id="CHEBI:29105"/>
        <label>2</label>
    </ligand>
</feature>
<feature type="binding site" evidence="1">
    <location>
        <position position="180"/>
    </location>
    <ligand>
        <name>Zn(2+)</name>
        <dbReference type="ChEBI" id="CHEBI:29105"/>
        <label>2</label>
    </ligand>
</feature>
<feature type="binding site" evidence="1">
    <location>
        <position position="202"/>
    </location>
    <ligand>
        <name>Zn(2+)</name>
        <dbReference type="ChEBI" id="CHEBI:29105"/>
        <label>1</label>
    </ligand>
</feature>
<feature type="binding site" evidence="1">
    <location>
        <position position="385"/>
    </location>
    <ligand>
        <name>Zn(2+)</name>
        <dbReference type="ChEBI" id="CHEBI:29105"/>
        <label>2</label>
    </ligand>
</feature>
<protein>
    <recommendedName>
        <fullName evidence="1">Peptidase T</fullName>
        <ecNumber evidence="1">3.4.11.4</ecNumber>
    </recommendedName>
    <alternativeName>
        <fullName evidence="1">Aminotripeptidase</fullName>
        <shortName evidence="1">Tripeptidase</shortName>
    </alternativeName>
    <alternativeName>
        <fullName evidence="1">Tripeptide aminopeptidase</fullName>
    </alternativeName>
</protein>
<organism>
    <name type="scientific">Haemophilus influenzae (strain PittEE)</name>
    <dbReference type="NCBI Taxonomy" id="374930"/>
    <lineage>
        <taxon>Bacteria</taxon>
        <taxon>Pseudomonadati</taxon>
        <taxon>Pseudomonadota</taxon>
        <taxon>Gammaproteobacteria</taxon>
        <taxon>Pasteurellales</taxon>
        <taxon>Pasteurellaceae</taxon>
        <taxon>Haemophilus</taxon>
    </lineage>
</organism>
<dbReference type="EC" id="3.4.11.4" evidence="1"/>
<dbReference type="EMBL" id="CP000671">
    <property type="protein sequence ID" value="ABQ98258.1"/>
    <property type="molecule type" value="Genomic_DNA"/>
</dbReference>
<dbReference type="SMR" id="A5UBV7"/>
<dbReference type="MEROPS" id="M20.003"/>
<dbReference type="KEGG" id="hip:CGSHiEE_04265"/>
<dbReference type="HOGENOM" id="CLU_053676_0_0_6"/>
<dbReference type="GO" id="GO:0005829">
    <property type="term" value="C:cytosol"/>
    <property type="evidence" value="ECO:0007669"/>
    <property type="project" value="TreeGrafter"/>
</dbReference>
<dbReference type="GO" id="GO:0008237">
    <property type="term" value="F:metallopeptidase activity"/>
    <property type="evidence" value="ECO:0007669"/>
    <property type="project" value="UniProtKB-KW"/>
</dbReference>
<dbReference type="GO" id="GO:0045148">
    <property type="term" value="F:tripeptide aminopeptidase activity"/>
    <property type="evidence" value="ECO:0007669"/>
    <property type="project" value="UniProtKB-UniRule"/>
</dbReference>
<dbReference type="GO" id="GO:0008270">
    <property type="term" value="F:zinc ion binding"/>
    <property type="evidence" value="ECO:0007669"/>
    <property type="project" value="UniProtKB-UniRule"/>
</dbReference>
<dbReference type="GO" id="GO:0043171">
    <property type="term" value="P:peptide catabolic process"/>
    <property type="evidence" value="ECO:0007669"/>
    <property type="project" value="UniProtKB-UniRule"/>
</dbReference>
<dbReference type="GO" id="GO:0006508">
    <property type="term" value="P:proteolysis"/>
    <property type="evidence" value="ECO:0007669"/>
    <property type="project" value="UniProtKB-UniRule"/>
</dbReference>
<dbReference type="CDD" id="cd03892">
    <property type="entry name" value="M20_peptT"/>
    <property type="match status" value="1"/>
</dbReference>
<dbReference type="FunFam" id="3.30.70.360:FF:000002">
    <property type="entry name" value="Peptidase T"/>
    <property type="match status" value="1"/>
</dbReference>
<dbReference type="Gene3D" id="3.30.70.360">
    <property type="match status" value="1"/>
</dbReference>
<dbReference type="Gene3D" id="3.40.630.10">
    <property type="entry name" value="Zn peptidases"/>
    <property type="match status" value="1"/>
</dbReference>
<dbReference type="HAMAP" id="MF_00550">
    <property type="entry name" value="Aminopeptidase_M20"/>
    <property type="match status" value="1"/>
</dbReference>
<dbReference type="InterPro" id="IPR001261">
    <property type="entry name" value="ArgE/DapE_CS"/>
</dbReference>
<dbReference type="InterPro" id="IPR036264">
    <property type="entry name" value="Bact_exopeptidase_dim_dom"/>
</dbReference>
<dbReference type="InterPro" id="IPR002933">
    <property type="entry name" value="Peptidase_M20"/>
</dbReference>
<dbReference type="InterPro" id="IPR011650">
    <property type="entry name" value="Peptidase_M20_dimer"/>
</dbReference>
<dbReference type="InterPro" id="IPR010161">
    <property type="entry name" value="Peptidase_M20B"/>
</dbReference>
<dbReference type="NCBIfam" id="TIGR01882">
    <property type="entry name" value="peptidase-T"/>
    <property type="match status" value="1"/>
</dbReference>
<dbReference type="NCBIfam" id="NF003976">
    <property type="entry name" value="PRK05469.1"/>
    <property type="match status" value="1"/>
</dbReference>
<dbReference type="NCBIfam" id="NF009920">
    <property type="entry name" value="PRK13381.1"/>
    <property type="match status" value="1"/>
</dbReference>
<dbReference type="PANTHER" id="PTHR42994">
    <property type="entry name" value="PEPTIDASE T"/>
    <property type="match status" value="1"/>
</dbReference>
<dbReference type="PANTHER" id="PTHR42994:SF1">
    <property type="entry name" value="PEPTIDASE T"/>
    <property type="match status" value="1"/>
</dbReference>
<dbReference type="Pfam" id="PF07687">
    <property type="entry name" value="M20_dimer"/>
    <property type="match status" value="1"/>
</dbReference>
<dbReference type="Pfam" id="PF01546">
    <property type="entry name" value="Peptidase_M20"/>
    <property type="match status" value="1"/>
</dbReference>
<dbReference type="PIRSF" id="PIRSF037215">
    <property type="entry name" value="Peptidase_M20B"/>
    <property type="match status" value="1"/>
</dbReference>
<dbReference type="SUPFAM" id="SSF55031">
    <property type="entry name" value="Bacterial exopeptidase dimerisation domain"/>
    <property type="match status" value="1"/>
</dbReference>
<dbReference type="SUPFAM" id="SSF53187">
    <property type="entry name" value="Zn-dependent exopeptidases"/>
    <property type="match status" value="1"/>
</dbReference>
<dbReference type="PROSITE" id="PS00758">
    <property type="entry name" value="ARGE_DAPE_CPG2_1"/>
    <property type="match status" value="1"/>
</dbReference>
<dbReference type="PROSITE" id="PS00759">
    <property type="entry name" value="ARGE_DAPE_CPG2_2"/>
    <property type="match status" value="1"/>
</dbReference>
<keyword id="KW-0031">Aminopeptidase</keyword>
<keyword id="KW-0963">Cytoplasm</keyword>
<keyword id="KW-0378">Hydrolase</keyword>
<keyword id="KW-0479">Metal-binding</keyword>
<keyword id="KW-0482">Metalloprotease</keyword>
<keyword id="KW-0645">Protease</keyword>
<keyword id="KW-0862">Zinc</keyword>
<accession>A5UBV7</accession>
<reference key="1">
    <citation type="journal article" date="2007" name="Genome Biol.">
        <title>Characterization and modeling of the Haemophilus influenzae core and supragenomes based on the complete genomic sequences of Rd and 12 clinical nontypeable strains.</title>
        <authorList>
            <person name="Hogg J.S."/>
            <person name="Hu F.Z."/>
            <person name="Janto B."/>
            <person name="Boissy R."/>
            <person name="Hayes J."/>
            <person name="Keefe R."/>
            <person name="Post J.C."/>
            <person name="Ehrlich G.D."/>
        </authorList>
    </citation>
    <scope>NUCLEOTIDE SEQUENCE [LARGE SCALE GENOMIC DNA]</scope>
    <source>
        <strain>PittEE</strain>
    </source>
</reference>
<sequence>MISQIDKTELLERFLHYVSFHTQSKPNAKHSPSSVGQMKLAMQLQKELIQFGLENVEVSKYAVVTAFLPANDPNLTKTIGLVAHLDTSPQCSGKNVRLEVIEEYRGGDIALGIGEEFISPVYYSFMQKLVGQTLIVTDGTTLLGADNKAGIAEIMTALSILQKENIPHCNIRVAFTPDEEIGLGIHYFPMEKFSCDWAYTIDGGEVGELEYENFNAATAKVRFFGRNIHTGYAKGKMLNALTLACEFQQVFPVDEVPEKTDGKAGFYHLEDFFGDIEQVELTYLIRDFDEQNFAQRKAFIKNQVEKFNAKKGLKKPIELEIQDSYQNMYDVVKNVPQSIELADRAMKAVGIKPNHKPIRGGTDGAFLASKGLACPNIFTGGYNFHSKHELVSLQGMENTVQVIIEMLKCKDL</sequence>